<name>RBFA_BUCAI</name>
<accession>P57457</accession>
<sequence length="120" mass="13999">MEKLFNRSDRIAQELQKKIAAIIQHSLKDPRIKTIITVSEVQVSKDLSYAQIFVSFLESDNNEKVKKKITILNRASSYIRKLLCKRMKLRIVPNIIFHHDDSFLKGNKISCILENLTKKE</sequence>
<reference key="1">
    <citation type="journal article" date="2000" name="Nature">
        <title>Genome sequence of the endocellular bacterial symbiont of aphids Buchnera sp. APS.</title>
        <authorList>
            <person name="Shigenobu S."/>
            <person name="Watanabe H."/>
            <person name="Hattori M."/>
            <person name="Sakaki Y."/>
            <person name="Ishikawa H."/>
        </authorList>
    </citation>
    <scope>NUCLEOTIDE SEQUENCE [LARGE SCALE GENOMIC DNA]</scope>
    <source>
        <strain>APS</strain>
    </source>
</reference>
<evidence type="ECO:0000255" key="1">
    <source>
        <dbReference type="HAMAP-Rule" id="MF_00003"/>
    </source>
</evidence>
<protein>
    <recommendedName>
        <fullName evidence="1">Ribosome-binding factor A</fullName>
    </recommendedName>
</protein>
<keyword id="KW-0963">Cytoplasm</keyword>
<keyword id="KW-1185">Reference proteome</keyword>
<keyword id="KW-0690">Ribosome biogenesis</keyword>
<comment type="function">
    <text evidence="1">One of several proteins that assist in the late maturation steps of the functional core of the 30S ribosomal subunit. Associates with free 30S ribosomal subunits (but not with 30S subunits that are part of 70S ribosomes or polysomes). Required for efficient processing of 16S rRNA. May interact with the 5'-terminal helix region of 16S rRNA.</text>
</comment>
<comment type="subunit">
    <text evidence="1">Monomer. Binds 30S ribosomal subunits, but not 50S ribosomal subunits or 70S ribosomes.</text>
</comment>
<comment type="subcellular location">
    <subcellularLocation>
        <location evidence="1">Cytoplasm</location>
    </subcellularLocation>
</comment>
<comment type="similarity">
    <text evidence="1">Belongs to the RbfA family.</text>
</comment>
<proteinExistence type="inferred from homology"/>
<feature type="chain" id="PRO_0000102634" description="Ribosome-binding factor A">
    <location>
        <begin position="1"/>
        <end position="120"/>
    </location>
</feature>
<gene>
    <name evidence="1" type="primary">rbfA</name>
    <name type="ordered locus">BU376</name>
</gene>
<dbReference type="EMBL" id="BA000003">
    <property type="protein sequence ID" value="BAB13080.1"/>
    <property type="molecule type" value="Genomic_DNA"/>
</dbReference>
<dbReference type="RefSeq" id="NP_240194.1">
    <property type="nucleotide sequence ID" value="NC_002528.1"/>
</dbReference>
<dbReference type="RefSeq" id="WP_009874334.1">
    <property type="nucleotide sequence ID" value="NC_002528.1"/>
</dbReference>
<dbReference type="SMR" id="P57457"/>
<dbReference type="STRING" id="563178.BUAP5A_369"/>
<dbReference type="EnsemblBacteria" id="BAB13080">
    <property type="protein sequence ID" value="BAB13080"/>
    <property type="gene ID" value="BAB13080"/>
</dbReference>
<dbReference type="KEGG" id="buc:BU376"/>
<dbReference type="PATRIC" id="fig|107806.10.peg.390"/>
<dbReference type="eggNOG" id="COG0858">
    <property type="taxonomic scope" value="Bacteria"/>
</dbReference>
<dbReference type="HOGENOM" id="CLU_089475_5_2_6"/>
<dbReference type="Proteomes" id="UP000001806">
    <property type="component" value="Chromosome"/>
</dbReference>
<dbReference type="GO" id="GO:0005829">
    <property type="term" value="C:cytosol"/>
    <property type="evidence" value="ECO:0007669"/>
    <property type="project" value="TreeGrafter"/>
</dbReference>
<dbReference type="GO" id="GO:0043024">
    <property type="term" value="F:ribosomal small subunit binding"/>
    <property type="evidence" value="ECO:0007669"/>
    <property type="project" value="TreeGrafter"/>
</dbReference>
<dbReference type="GO" id="GO:0030490">
    <property type="term" value="P:maturation of SSU-rRNA"/>
    <property type="evidence" value="ECO:0007669"/>
    <property type="project" value="UniProtKB-UniRule"/>
</dbReference>
<dbReference type="Gene3D" id="3.30.300.20">
    <property type="match status" value="1"/>
</dbReference>
<dbReference type="HAMAP" id="MF_00003">
    <property type="entry name" value="RbfA"/>
    <property type="match status" value="1"/>
</dbReference>
<dbReference type="InterPro" id="IPR015946">
    <property type="entry name" value="KH_dom-like_a/b"/>
</dbReference>
<dbReference type="InterPro" id="IPR000238">
    <property type="entry name" value="RbfA"/>
</dbReference>
<dbReference type="InterPro" id="IPR023799">
    <property type="entry name" value="RbfA_dom_sf"/>
</dbReference>
<dbReference type="InterPro" id="IPR020053">
    <property type="entry name" value="Ribosome-bd_factorA_CS"/>
</dbReference>
<dbReference type="NCBIfam" id="TIGR00082">
    <property type="entry name" value="rbfA"/>
    <property type="match status" value="1"/>
</dbReference>
<dbReference type="PANTHER" id="PTHR33515">
    <property type="entry name" value="RIBOSOME-BINDING FACTOR A, CHLOROPLASTIC-RELATED"/>
    <property type="match status" value="1"/>
</dbReference>
<dbReference type="PANTHER" id="PTHR33515:SF1">
    <property type="entry name" value="RIBOSOME-BINDING FACTOR A, CHLOROPLASTIC-RELATED"/>
    <property type="match status" value="1"/>
</dbReference>
<dbReference type="Pfam" id="PF02033">
    <property type="entry name" value="RBFA"/>
    <property type="match status" value="1"/>
</dbReference>
<dbReference type="SUPFAM" id="SSF89919">
    <property type="entry name" value="Ribosome-binding factor A, RbfA"/>
    <property type="match status" value="1"/>
</dbReference>
<dbReference type="PROSITE" id="PS01319">
    <property type="entry name" value="RBFA"/>
    <property type="match status" value="1"/>
</dbReference>
<organism>
    <name type="scientific">Buchnera aphidicola subsp. Acyrthosiphon pisum (strain APS)</name>
    <name type="common">Acyrthosiphon pisum symbiotic bacterium</name>
    <dbReference type="NCBI Taxonomy" id="107806"/>
    <lineage>
        <taxon>Bacteria</taxon>
        <taxon>Pseudomonadati</taxon>
        <taxon>Pseudomonadota</taxon>
        <taxon>Gammaproteobacteria</taxon>
        <taxon>Enterobacterales</taxon>
        <taxon>Erwiniaceae</taxon>
        <taxon>Buchnera</taxon>
    </lineage>
</organism>